<gene>
    <name evidence="1" type="primary">yciB</name>
    <name type="ordered locus">APL_0972</name>
</gene>
<keyword id="KW-0997">Cell inner membrane</keyword>
<keyword id="KW-1003">Cell membrane</keyword>
<keyword id="KW-0472">Membrane</keyword>
<keyword id="KW-1185">Reference proteome</keyword>
<keyword id="KW-0812">Transmembrane</keyword>
<keyword id="KW-1133">Transmembrane helix</keyword>
<feature type="chain" id="PRO_1000020979" description="Inner membrane-spanning protein YciB">
    <location>
        <begin position="1"/>
        <end position="183"/>
    </location>
</feature>
<feature type="transmembrane region" description="Helical" evidence="1">
    <location>
        <begin position="19"/>
        <end position="39"/>
    </location>
</feature>
<feature type="transmembrane region" description="Helical" evidence="1">
    <location>
        <begin position="53"/>
        <end position="73"/>
    </location>
</feature>
<feature type="transmembrane region" description="Helical" evidence="1">
    <location>
        <begin position="76"/>
        <end position="96"/>
    </location>
</feature>
<feature type="transmembrane region" description="Helical" evidence="1">
    <location>
        <begin position="121"/>
        <end position="141"/>
    </location>
</feature>
<feature type="transmembrane region" description="Helical" evidence="1">
    <location>
        <begin position="151"/>
        <end position="171"/>
    </location>
</feature>
<reference key="1">
    <citation type="journal article" date="2008" name="J. Bacteriol.">
        <title>The complete genome sequence of Actinobacillus pleuropneumoniae L20 (serotype 5b).</title>
        <authorList>
            <person name="Foote S.J."/>
            <person name="Bosse J.T."/>
            <person name="Bouevitch A.B."/>
            <person name="Langford P.R."/>
            <person name="Young N.M."/>
            <person name="Nash J.H.E."/>
        </authorList>
    </citation>
    <scope>NUCLEOTIDE SEQUENCE [LARGE SCALE GENOMIC DNA]</scope>
    <source>
        <strain>L20</strain>
    </source>
</reference>
<sequence>MKQLLEFIPLILFFTVYKLYGVQQAAITLVIATVIQLIVLKVLYKKIEKSQWIMGIFAVFFGILTAYFNDLNFLKWKVTIINGLFAAVLLVSQFVFKKPIIQMLLGKELKLPTNVWNRLNLGWAGFFIICMLLNIVISYYFSDDVWATFKTFGFTGLSLIAAIATGVYLYPHLKNVENTNEQA</sequence>
<proteinExistence type="inferred from homology"/>
<comment type="function">
    <text evidence="1">Plays a role in cell envelope biogenesis, maintenance of cell envelope integrity and membrane homeostasis.</text>
</comment>
<comment type="subcellular location">
    <subcellularLocation>
        <location evidence="1">Cell inner membrane</location>
        <topology evidence="1">Multi-pass membrane protein</topology>
    </subcellularLocation>
</comment>
<comment type="similarity">
    <text evidence="1">Belongs to the YciB family.</text>
</comment>
<protein>
    <recommendedName>
        <fullName evidence="1">Inner membrane-spanning protein YciB</fullName>
    </recommendedName>
</protein>
<evidence type="ECO:0000255" key="1">
    <source>
        <dbReference type="HAMAP-Rule" id="MF_00189"/>
    </source>
</evidence>
<organism>
    <name type="scientific">Actinobacillus pleuropneumoniae serotype 5b (strain L20)</name>
    <dbReference type="NCBI Taxonomy" id="416269"/>
    <lineage>
        <taxon>Bacteria</taxon>
        <taxon>Pseudomonadati</taxon>
        <taxon>Pseudomonadota</taxon>
        <taxon>Gammaproteobacteria</taxon>
        <taxon>Pasteurellales</taxon>
        <taxon>Pasteurellaceae</taxon>
        <taxon>Actinobacillus</taxon>
    </lineage>
</organism>
<name>YCIB_ACTP2</name>
<accession>A3N0Y0</accession>
<dbReference type="EMBL" id="CP000569">
    <property type="protein sequence ID" value="ABN74066.1"/>
    <property type="molecule type" value="Genomic_DNA"/>
</dbReference>
<dbReference type="RefSeq" id="WP_011848507.1">
    <property type="nucleotide sequence ID" value="NC_009053.1"/>
</dbReference>
<dbReference type="STRING" id="416269.APL_0972"/>
<dbReference type="EnsemblBacteria" id="ABN74066">
    <property type="protein sequence ID" value="ABN74066"/>
    <property type="gene ID" value="APL_0972"/>
</dbReference>
<dbReference type="KEGG" id="apl:APL_0972"/>
<dbReference type="PATRIC" id="fig|416269.6.peg.1018"/>
<dbReference type="eggNOG" id="COG2917">
    <property type="taxonomic scope" value="Bacteria"/>
</dbReference>
<dbReference type="HOGENOM" id="CLU_089554_2_0_6"/>
<dbReference type="Proteomes" id="UP000001432">
    <property type="component" value="Chromosome"/>
</dbReference>
<dbReference type="GO" id="GO:0005886">
    <property type="term" value="C:plasma membrane"/>
    <property type="evidence" value="ECO:0007669"/>
    <property type="project" value="UniProtKB-SubCell"/>
</dbReference>
<dbReference type="HAMAP" id="MF_00189">
    <property type="entry name" value="YciB"/>
    <property type="match status" value="1"/>
</dbReference>
<dbReference type="InterPro" id="IPR006008">
    <property type="entry name" value="YciB"/>
</dbReference>
<dbReference type="NCBIfam" id="TIGR00997">
    <property type="entry name" value="ispZ"/>
    <property type="match status" value="1"/>
</dbReference>
<dbReference type="NCBIfam" id="NF001324">
    <property type="entry name" value="PRK00259.1-2"/>
    <property type="match status" value="1"/>
</dbReference>
<dbReference type="PANTHER" id="PTHR36917:SF1">
    <property type="entry name" value="INNER MEMBRANE-SPANNING PROTEIN YCIB"/>
    <property type="match status" value="1"/>
</dbReference>
<dbReference type="PANTHER" id="PTHR36917">
    <property type="entry name" value="INTRACELLULAR SEPTATION PROTEIN A-RELATED"/>
    <property type="match status" value="1"/>
</dbReference>
<dbReference type="Pfam" id="PF04279">
    <property type="entry name" value="IspA"/>
    <property type="match status" value="1"/>
</dbReference>